<sequence>MKFKLFLLVFFVFLLPYLSQSCENTFSCPTLNQTCTGQCSAGLVCNQTLSSCQEYEKCDSSLPLAEDTCSQDGYICVSNVCLPFIGTQYPSSQCKQNSNCLMSLCAGNICMVMPGSQCQTNSQCSPDQFCSTTFIGTTSTSPSTMTLPMTMTLPMTMTLPITMTMGSSSVCTNRLQLNSQCSTSDSCQTGLACINSVCSPIFSGAENATCFPGAIEPTKAACDVGLSCLNGANGYSCKSYVENQSCDPSDEYPVCNSDYQSCKCNSKGKGSCQSYYKLTQECKDSSNKLVLCAKSKNSIPSYKDYVTQINCQSQLCNYSRDCIDPKAKVSTCFNDLFLMCPSDYQEPEIGSSSSSSSSSSSSGSSSNSTSSSTSSTSSTSSESSESSNGSNSNSVSSESSSPSSSSVESSSNSKSNHTSSESSSSDDDLGNPSSSSILSVSKLIILLISIILYCF</sequence>
<name>DIA1_DICDI</name>
<feature type="signal peptide" evidence="1">
    <location>
        <begin position="1"/>
        <end position="21"/>
    </location>
</feature>
<feature type="chain" id="PRO_0000361776" description="Differentiation-associated protein 1">
    <location>
        <begin position="22"/>
        <end position="433"/>
    </location>
</feature>
<feature type="propeptide" id="PRO_0000361777" description="Removed in mature form" evidence="1">
    <location>
        <begin position="434"/>
        <end position="455"/>
    </location>
</feature>
<feature type="region of interest" description="Disordered" evidence="2">
    <location>
        <begin position="349"/>
        <end position="434"/>
    </location>
</feature>
<feature type="compositionally biased region" description="Low complexity" evidence="2">
    <location>
        <begin position="351"/>
        <end position="423"/>
    </location>
</feature>
<feature type="lipid moiety-binding region" description="GPI-like-anchor amidated serine" evidence="1">
    <location>
        <position position="433"/>
    </location>
</feature>
<feature type="sequence conflict" description="In Ref. 1; BAB13513." evidence="5" ref="1">
    <original>F</original>
    <variation>S</variation>
    <location>
        <position position="26"/>
    </location>
</feature>
<feature type="sequence conflict" description="In Ref. 1; BAB13513." evidence="5" ref="1">
    <original>IGTQYPSSQCKQNSNCL</original>
    <variation>MGTHILRHNVTELKLF</variation>
    <location>
        <begin position="85"/>
        <end position="101"/>
    </location>
</feature>
<feature type="sequence conflict" description="In Ref. 1; BAB13513." evidence="5" ref="1">
    <original>SD</original>
    <variation>RY</variation>
    <location>
        <begin position="342"/>
        <end position="343"/>
    </location>
</feature>
<proteinExistence type="evidence at transcript level"/>
<keyword id="KW-1003">Cell membrane</keyword>
<keyword id="KW-0221">Differentiation</keyword>
<keyword id="KW-0325">Glycoprotein</keyword>
<keyword id="KW-0336">GPI-anchor</keyword>
<keyword id="KW-0449">Lipoprotein</keyword>
<keyword id="KW-0472">Membrane</keyword>
<keyword id="KW-1185">Reference proteome</keyword>
<keyword id="KW-0732">Signal</keyword>
<gene>
    <name type="primary">dia1</name>
    <name type="ORF">DDB_G0285431</name>
</gene>
<accession>Q54N81</accession>
<accession>Q9GV74</accession>
<dbReference type="EMBL" id="AB007026">
    <property type="protein sequence ID" value="BAB13513.1"/>
    <property type="status" value="ALT_FRAME"/>
    <property type="molecule type" value="mRNA"/>
</dbReference>
<dbReference type="EMBL" id="AAFI02000079">
    <property type="protein sequence ID" value="EAL64553.1"/>
    <property type="molecule type" value="Genomic_DNA"/>
</dbReference>
<dbReference type="RefSeq" id="XP_638062.1">
    <property type="nucleotide sequence ID" value="XM_632970.1"/>
</dbReference>
<dbReference type="STRING" id="44689.Q54N81"/>
<dbReference type="PaxDb" id="44689-DDB0191142"/>
<dbReference type="EnsemblProtists" id="EAL64553">
    <property type="protein sequence ID" value="EAL64553"/>
    <property type="gene ID" value="DDB_G0285431"/>
</dbReference>
<dbReference type="GeneID" id="8625108"/>
<dbReference type="KEGG" id="ddi:DDB_G0285431"/>
<dbReference type="dictyBase" id="DDB_G0285431">
    <property type="gene designation" value="dia1"/>
</dbReference>
<dbReference type="VEuPathDB" id="AmoebaDB:DDB_G0285431"/>
<dbReference type="eggNOG" id="ENOG502RHXC">
    <property type="taxonomic scope" value="Eukaryota"/>
</dbReference>
<dbReference type="HOGENOM" id="CLU_601917_0_0_1"/>
<dbReference type="InParanoid" id="Q54N81"/>
<dbReference type="OMA" id="IACANSH"/>
<dbReference type="PhylomeDB" id="Q54N81"/>
<dbReference type="PRO" id="PR:Q54N81"/>
<dbReference type="Proteomes" id="UP000002195">
    <property type="component" value="Chromosome 4"/>
</dbReference>
<dbReference type="GO" id="GO:0005886">
    <property type="term" value="C:plasma membrane"/>
    <property type="evidence" value="ECO:0007669"/>
    <property type="project" value="UniProtKB-SubCell"/>
</dbReference>
<dbReference type="GO" id="GO:0098552">
    <property type="term" value="C:side of membrane"/>
    <property type="evidence" value="ECO:0007669"/>
    <property type="project" value="UniProtKB-KW"/>
</dbReference>
<dbReference type="GO" id="GO:0030154">
    <property type="term" value="P:cell differentiation"/>
    <property type="evidence" value="ECO:0007669"/>
    <property type="project" value="UniProtKB-KW"/>
</dbReference>
<dbReference type="GO" id="GO:0009267">
    <property type="term" value="P:cellular response to starvation"/>
    <property type="evidence" value="ECO:0000270"/>
    <property type="project" value="dictyBase"/>
</dbReference>
<dbReference type="InterPro" id="IPR052326">
    <property type="entry name" value="Diff-Dev_Assoc_Protein"/>
</dbReference>
<dbReference type="PANTHER" id="PTHR33459">
    <property type="entry name" value="DD-GDCA PROTEIN"/>
    <property type="match status" value="1"/>
</dbReference>
<dbReference type="PANTHER" id="PTHR33459:SF11">
    <property type="entry name" value="DIFFERENTIATION-ASSOCIATED PROTEIN 1"/>
    <property type="match status" value="1"/>
</dbReference>
<organism>
    <name type="scientific">Dictyostelium discoideum</name>
    <name type="common">Social amoeba</name>
    <dbReference type="NCBI Taxonomy" id="44689"/>
    <lineage>
        <taxon>Eukaryota</taxon>
        <taxon>Amoebozoa</taxon>
        <taxon>Evosea</taxon>
        <taxon>Eumycetozoa</taxon>
        <taxon>Dictyostelia</taxon>
        <taxon>Dictyosteliales</taxon>
        <taxon>Dictyosteliaceae</taxon>
        <taxon>Dictyostelium</taxon>
    </lineage>
</organism>
<comment type="function">
    <text>Plays a role in differentiation.</text>
</comment>
<comment type="subcellular location">
    <subcellularLocation>
        <location evidence="5">Cell membrane</location>
        <topology evidence="5">Lipid-anchor</topology>
        <topology evidence="5">GPI-anchor</topology>
    </subcellularLocation>
</comment>
<comment type="developmental stage">
    <text evidence="3 4">Specifically expressed in cells differentiation from the PS point, a specific point from which cells enter the differentiation phase in response to starvation. Not present in the exponentially growing cells, starts to accumulate within 2 hours following removal of growth medium, reaching a peak at 4 hours then disappearing.</text>
</comment>
<comment type="miscellaneous">
    <text>Overexpression rather impaired the progression of differentiation. Antisense RNA-mediated dia1 inactivation was found to enhance the initial step of cell differentiation.</text>
</comment>
<comment type="sequence caution" evidence="5">
    <conflict type="frameshift">
        <sequence resource="EMBL-CDS" id="BAB13513"/>
    </conflict>
</comment>
<evidence type="ECO:0000255" key="1"/>
<evidence type="ECO:0000256" key="2">
    <source>
        <dbReference type="SAM" id="MobiDB-lite"/>
    </source>
</evidence>
<evidence type="ECO:0000269" key="3">
    <source>
    </source>
</evidence>
<evidence type="ECO:0000269" key="4">
    <source>
    </source>
</evidence>
<evidence type="ECO:0000305" key="5"/>
<reference key="1">
    <citation type="journal article" date="2000" name="Development">
        <title>Suppression of the growth/differentiation transition in Dictyostelium development by transient expression of a novel gene, dia1.</title>
        <authorList>
            <person name="Hirose S."/>
            <person name="Inazu Y."/>
            <person name="Chae S.-C."/>
            <person name="Maeda Y."/>
        </authorList>
    </citation>
    <scope>NUCLEOTIDE SEQUENCE [MRNA]</scope>
    <scope>DEVELOPMENTAL STAGE</scope>
    <source>
        <strain>AX2</strain>
    </source>
</reference>
<reference key="2">
    <citation type="journal article" date="2005" name="Nature">
        <title>The genome of the social amoeba Dictyostelium discoideum.</title>
        <authorList>
            <person name="Eichinger L."/>
            <person name="Pachebat J.A."/>
            <person name="Gloeckner G."/>
            <person name="Rajandream M.A."/>
            <person name="Sucgang R."/>
            <person name="Berriman M."/>
            <person name="Song J."/>
            <person name="Olsen R."/>
            <person name="Szafranski K."/>
            <person name="Xu Q."/>
            <person name="Tunggal B."/>
            <person name="Kummerfeld S."/>
            <person name="Madera M."/>
            <person name="Konfortov B.A."/>
            <person name="Rivero F."/>
            <person name="Bankier A.T."/>
            <person name="Lehmann R."/>
            <person name="Hamlin N."/>
            <person name="Davies R."/>
            <person name="Gaudet P."/>
            <person name="Fey P."/>
            <person name="Pilcher K."/>
            <person name="Chen G."/>
            <person name="Saunders D."/>
            <person name="Sodergren E.J."/>
            <person name="Davis P."/>
            <person name="Kerhornou A."/>
            <person name="Nie X."/>
            <person name="Hall N."/>
            <person name="Anjard C."/>
            <person name="Hemphill L."/>
            <person name="Bason N."/>
            <person name="Farbrother P."/>
            <person name="Desany B."/>
            <person name="Just E."/>
            <person name="Morio T."/>
            <person name="Rost R."/>
            <person name="Churcher C.M."/>
            <person name="Cooper J."/>
            <person name="Haydock S."/>
            <person name="van Driessche N."/>
            <person name="Cronin A."/>
            <person name="Goodhead I."/>
            <person name="Muzny D.M."/>
            <person name="Mourier T."/>
            <person name="Pain A."/>
            <person name="Lu M."/>
            <person name="Harper D."/>
            <person name="Lindsay R."/>
            <person name="Hauser H."/>
            <person name="James K.D."/>
            <person name="Quiles M."/>
            <person name="Madan Babu M."/>
            <person name="Saito T."/>
            <person name="Buchrieser C."/>
            <person name="Wardroper A."/>
            <person name="Felder M."/>
            <person name="Thangavelu M."/>
            <person name="Johnson D."/>
            <person name="Knights A."/>
            <person name="Loulseged H."/>
            <person name="Mungall K.L."/>
            <person name="Oliver K."/>
            <person name="Price C."/>
            <person name="Quail M.A."/>
            <person name="Urushihara H."/>
            <person name="Hernandez J."/>
            <person name="Rabbinowitsch E."/>
            <person name="Steffen D."/>
            <person name="Sanders M."/>
            <person name="Ma J."/>
            <person name="Kohara Y."/>
            <person name="Sharp S."/>
            <person name="Simmonds M.N."/>
            <person name="Spiegler S."/>
            <person name="Tivey A."/>
            <person name="Sugano S."/>
            <person name="White B."/>
            <person name="Walker D."/>
            <person name="Woodward J.R."/>
            <person name="Winckler T."/>
            <person name="Tanaka Y."/>
            <person name="Shaulsky G."/>
            <person name="Schleicher M."/>
            <person name="Weinstock G.M."/>
            <person name="Rosenthal A."/>
            <person name="Cox E.C."/>
            <person name="Chisholm R.L."/>
            <person name="Gibbs R.A."/>
            <person name="Loomis W.F."/>
            <person name="Platzer M."/>
            <person name="Kay R.R."/>
            <person name="Williams J.G."/>
            <person name="Dear P.H."/>
            <person name="Noegel A.A."/>
            <person name="Barrell B.G."/>
            <person name="Kuspa A."/>
        </authorList>
    </citation>
    <scope>NUCLEOTIDE SEQUENCE [LARGE SCALE GENOMIC DNA]</scope>
    <source>
        <strain>AX4</strain>
    </source>
</reference>
<reference key="3">
    <citation type="journal article" date="2004" name="J. Cell Sci.">
        <title>Translocation of the Dictyostelium TRAP1 homologue to mitochondria induces a novel prestarvation response.</title>
        <authorList>
            <person name="Morita T."/>
            <person name="Amagai A."/>
            <person name="Maeda Y."/>
        </authorList>
    </citation>
    <scope>DEVELOPMENTAL STAGE</scope>
</reference>
<protein>
    <recommendedName>
        <fullName>Differentiation-associated protein 1</fullName>
        <shortName>DIA-1</shortName>
    </recommendedName>
</protein>